<feature type="chain" id="PRO_0000325340" description="3-phosphoshikimate 1-carboxyvinyltransferase">
    <location>
        <begin position="1"/>
        <end position="428"/>
    </location>
</feature>
<feature type="active site" description="Proton acceptor" evidence="1">
    <location>
        <position position="313"/>
    </location>
</feature>
<feature type="binding site" evidence="1">
    <location>
        <position position="21"/>
    </location>
    <ligand>
        <name>3-phosphoshikimate</name>
        <dbReference type="ChEBI" id="CHEBI:145989"/>
    </ligand>
</feature>
<feature type="binding site" evidence="1">
    <location>
        <position position="21"/>
    </location>
    <ligand>
        <name>phosphoenolpyruvate</name>
        <dbReference type="ChEBI" id="CHEBI:58702"/>
    </ligand>
</feature>
<feature type="binding site" evidence="1">
    <location>
        <position position="22"/>
    </location>
    <ligand>
        <name>3-phosphoshikimate</name>
        <dbReference type="ChEBI" id="CHEBI:145989"/>
    </ligand>
</feature>
<feature type="binding site" evidence="1">
    <location>
        <position position="26"/>
    </location>
    <ligand>
        <name>3-phosphoshikimate</name>
        <dbReference type="ChEBI" id="CHEBI:145989"/>
    </ligand>
</feature>
<feature type="binding site" evidence="1">
    <location>
        <position position="92"/>
    </location>
    <ligand>
        <name>phosphoenolpyruvate</name>
        <dbReference type="ChEBI" id="CHEBI:58702"/>
    </ligand>
</feature>
<feature type="binding site" evidence="1">
    <location>
        <position position="120"/>
    </location>
    <ligand>
        <name>phosphoenolpyruvate</name>
        <dbReference type="ChEBI" id="CHEBI:58702"/>
    </ligand>
</feature>
<feature type="binding site" evidence="1">
    <location>
        <position position="165"/>
    </location>
    <ligand>
        <name>3-phosphoshikimate</name>
        <dbReference type="ChEBI" id="CHEBI:145989"/>
    </ligand>
</feature>
<feature type="binding site" evidence="1">
    <location>
        <position position="167"/>
    </location>
    <ligand>
        <name>3-phosphoshikimate</name>
        <dbReference type="ChEBI" id="CHEBI:145989"/>
    </ligand>
</feature>
<feature type="binding site" evidence="1">
    <location>
        <position position="167"/>
    </location>
    <ligand>
        <name>phosphoenolpyruvate</name>
        <dbReference type="ChEBI" id="CHEBI:58702"/>
    </ligand>
</feature>
<feature type="binding site" evidence="1">
    <location>
        <position position="313"/>
    </location>
    <ligand>
        <name>3-phosphoshikimate</name>
        <dbReference type="ChEBI" id="CHEBI:145989"/>
    </ligand>
</feature>
<feature type="binding site" evidence="1">
    <location>
        <position position="340"/>
    </location>
    <ligand>
        <name>3-phosphoshikimate</name>
        <dbReference type="ChEBI" id="CHEBI:145989"/>
    </ligand>
</feature>
<feature type="binding site" evidence="1">
    <location>
        <position position="344"/>
    </location>
    <ligand>
        <name>phosphoenolpyruvate</name>
        <dbReference type="ChEBI" id="CHEBI:58702"/>
    </ligand>
</feature>
<feature type="binding site" evidence="1">
    <location>
        <position position="386"/>
    </location>
    <ligand>
        <name>phosphoenolpyruvate</name>
        <dbReference type="ChEBI" id="CHEBI:58702"/>
    </ligand>
</feature>
<keyword id="KW-0028">Amino-acid biosynthesis</keyword>
<keyword id="KW-0057">Aromatic amino acid biosynthesis</keyword>
<keyword id="KW-0963">Cytoplasm</keyword>
<keyword id="KW-1185">Reference proteome</keyword>
<keyword id="KW-0808">Transferase</keyword>
<name>AROA_CARHZ</name>
<comment type="function">
    <text evidence="1">Catalyzes the transfer of the enolpyruvyl moiety of phosphoenolpyruvate (PEP) to the 5-hydroxyl of shikimate-3-phosphate (S3P) to produce enolpyruvyl shikimate-3-phosphate and inorganic phosphate.</text>
</comment>
<comment type="catalytic activity">
    <reaction evidence="1">
        <text>3-phosphoshikimate + phosphoenolpyruvate = 5-O-(1-carboxyvinyl)-3-phosphoshikimate + phosphate</text>
        <dbReference type="Rhea" id="RHEA:21256"/>
        <dbReference type="ChEBI" id="CHEBI:43474"/>
        <dbReference type="ChEBI" id="CHEBI:57701"/>
        <dbReference type="ChEBI" id="CHEBI:58702"/>
        <dbReference type="ChEBI" id="CHEBI:145989"/>
        <dbReference type="EC" id="2.5.1.19"/>
    </reaction>
    <physiologicalReaction direction="left-to-right" evidence="1">
        <dbReference type="Rhea" id="RHEA:21257"/>
    </physiologicalReaction>
</comment>
<comment type="pathway">
    <text evidence="1">Metabolic intermediate biosynthesis; chorismate biosynthesis; chorismate from D-erythrose 4-phosphate and phosphoenolpyruvate: step 6/7.</text>
</comment>
<comment type="subunit">
    <text evidence="1">Monomer.</text>
</comment>
<comment type="subcellular location">
    <subcellularLocation>
        <location evidence="1">Cytoplasm</location>
    </subcellularLocation>
</comment>
<comment type="similarity">
    <text evidence="1">Belongs to the EPSP synthase family.</text>
</comment>
<reference key="1">
    <citation type="journal article" date="2005" name="PLoS Genet.">
        <title>Life in hot carbon monoxide: the complete genome sequence of Carboxydothermus hydrogenoformans Z-2901.</title>
        <authorList>
            <person name="Wu M."/>
            <person name="Ren Q."/>
            <person name="Durkin A.S."/>
            <person name="Daugherty S.C."/>
            <person name="Brinkac L.M."/>
            <person name="Dodson R.J."/>
            <person name="Madupu R."/>
            <person name="Sullivan S.A."/>
            <person name="Kolonay J.F."/>
            <person name="Nelson W.C."/>
            <person name="Tallon L.J."/>
            <person name="Jones K.M."/>
            <person name="Ulrich L.E."/>
            <person name="Gonzalez J.M."/>
            <person name="Zhulin I.B."/>
            <person name="Robb F.T."/>
            <person name="Eisen J.A."/>
        </authorList>
    </citation>
    <scope>NUCLEOTIDE SEQUENCE [LARGE SCALE GENOMIC DNA]</scope>
    <source>
        <strain>ATCC BAA-161 / DSM 6008 / Z-2901</strain>
    </source>
</reference>
<protein>
    <recommendedName>
        <fullName evidence="1">3-phosphoshikimate 1-carboxyvinyltransferase</fullName>
        <ecNumber evidence="1">2.5.1.19</ecNumber>
    </recommendedName>
    <alternativeName>
        <fullName evidence="1">5-enolpyruvylshikimate-3-phosphate synthase</fullName>
        <shortName evidence="1">EPSP synthase</shortName>
        <shortName evidence="1">EPSPS</shortName>
    </alternativeName>
</protein>
<sequence length="428" mass="45997">MKKITAAKKGLKGQVTVPGDKSISHRALILGALAEGITEIENFLVAQDTLATLNCLEKYGVRIERRDTFVRVFGTAQNFSEPQDVLDAQNSGTTLRLLSGVAATFPFVSVFTGDASLRRRPMKRVLEPLTQMGARVLARGQGDYAPFAIKGGKLRGQDFILKKASAQVKSALLLAGLRAEGNTSVTEPQLSRDHTERMLVGFGAKIKREGLRVEISGGQKLLGQKVIVPGDFSTASFFIVAALIVPDSHLIIKNVGLNPTRTGLLTVLKEMGANIQILNFHENSGEPVGDLEVKYSPLKAVEVPPEIVPAMIDEFPILAVAMALAYGESKVRGAEELRVKESDRIKSIVSEFSKMGVAVKELPDGFIISGGNKILGTTVDSHHDHRIAMSLAVLGLTAAGTTEILNADAVAISYPEFFQQLTKLTEGA</sequence>
<organism>
    <name type="scientific">Carboxydothermus hydrogenoformans (strain ATCC BAA-161 / DSM 6008 / Z-2901)</name>
    <dbReference type="NCBI Taxonomy" id="246194"/>
    <lineage>
        <taxon>Bacteria</taxon>
        <taxon>Bacillati</taxon>
        <taxon>Bacillota</taxon>
        <taxon>Clostridia</taxon>
        <taxon>Thermoanaerobacterales</taxon>
        <taxon>Thermoanaerobacteraceae</taxon>
        <taxon>Carboxydothermus</taxon>
    </lineage>
</organism>
<accession>Q3AAT7</accession>
<gene>
    <name evidence="1" type="primary">aroA</name>
    <name type="ordered locus">CHY_1928</name>
</gene>
<dbReference type="EC" id="2.5.1.19" evidence="1"/>
<dbReference type="EMBL" id="CP000141">
    <property type="protein sequence ID" value="ABB15286.1"/>
    <property type="molecule type" value="Genomic_DNA"/>
</dbReference>
<dbReference type="RefSeq" id="WP_011344820.1">
    <property type="nucleotide sequence ID" value="NC_007503.1"/>
</dbReference>
<dbReference type="SMR" id="Q3AAT7"/>
<dbReference type="FunCoup" id="Q3AAT7">
    <property type="interactions" value="367"/>
</dbReference>
<dbReference type="STRING" id="246194.CHY_1928"/>
<dbReference type="KEGG" id="chy:CHY_1928"/>
<dbReference type="eggNOG" id="COG0128">
    <property type="taxonomic scope" value="Bacteria"/>
</dbReference>
<dbReference type="HOGENOM" id="CLU_024321_0_1_9"/>
<dbReference type="InParanoid" id="Q3AAT7"/>
<dbReference type="OrthoDB" id="9809920at2"/>
<dbReference type="UniPathway" id="UPA00053">
    <property type="reaction ID" value="UER00089"/>
</dbReference>
<dbReference type="Proteomes" id="UP000002706">
    <property type="component" value="Chromosome"/>
</dbReference>
<dbReference type="GO" id="GO:0005737">
    <property type="term" value="C:cytoplasm"/>
    <property type="evidence" value="ECO:0007669"/>
    <property type="project" value="UniProtKB-SubCell"/>
</dbReference>
<dbReference type="GO" id="GO:0003866">
    <property type="term" value="F:3-phosphoshikimate 1-carboxyvinyltransferase activity"/>
    <property type="evidence" value="ECO:0007669"/>
    <property type="project" value="UniProtKB-UniRule"/>
</dbReference>
<dbReference type="GO" id="GO:0008652">
    <property type="term" value="P:amino acid biosynthetic process"/>
    <property type="evidence" value="ECO:0007669"/>
    <property type="project" value="UniProtKB-KW"/>
</dbReference>
<dbReference type="GO" id="GO:0009073">
    <property type="term" value="P:aromatic amino acid family biosynthetic process"/>
    <property type="evidence" value="ECO:0007669"/>
    <property type="project" value="UniProtKB-KW"/>
</dbReference>
<dbReference type="GO" id="GO:0009423">
    <property type="term" value="P:chorismate biosynthetic process"/>
    <property type="evidence" value="ECO:0007669"/>
    <property type="project" value="UniProtKB-UniRule"/>
</dbReference>
<dbReference type="CDD" id="cd01556">
    <property type="entry name" value="EPSP_synthase"/>
    <property type="match status" value="1"/>
</dbReference>
<dbReference type="FunFam" id="3.65.10.10:FF:000005">
    <property type="entry name" value="3-phosphoshikimate 1-carboxyvinyltransferase"/>
    <property type="match status" value="1"/>
</dbReference>
<dbReference type="FunFam" id="3.65.10.10:FF:000006">
    <property type="entry name" value="3-phosphoshikimate 1-carboxyvinyltransferase"/>
    <property type="match status" value="1"/>
</dbReference>
<dbReference type="Gene3D" id="3.65.10.10">
    <property type="entry name" value="Enolpyruvate transferase domain"/>
    <property type="match status" value="2"/>
</dbReference>
<dbReference type="HAMAP" id="MF_00210">
    <property type="entry name" value="EPSP_synth"/>
    <property type="match status" value="1"/>
</dbReference>
<dbReference type="InterPro" id="IPR001986">
    <property type="entry name" value="Enolpyruvate_Tfrase_dom"/>
</dbReference>
<dbReference type="InterPro" id="IPR036968">
    <property type="entry name" value="Enolpyruvate_Tfrase_sf"/>
</dbReference>
<dbReference type="InterPro" id="IPR006264">
    <property type="entry name" value="EPSP_synthase"/>
</dbReference>
<dbReference type="InterPro" id="IPR023193">
    <property type="entry name" value="EPSP_synthase_CS"/>
</dbReference>
<dbReference type="InterPro" id="IPR013792">
    <property type="entry name" value="RNA3'P_cycl/enolpyr_Trfase_a/b"/>
</dbReference>
<dbReference type="NCBIfam" id="TIGR01356">
    <property type="entry name" value="aroA"/>
    <property type="match status" value="1"/>
</dbReference>
<dbReference type="PANTHER" id="PTHR21090">
    <property type="entry name" value="AROM/DEHYDROQUINATE SYNTHASE"/>
    <property type="match status" value="1"/>
</dbReference>
<dbReference type="PANTHER" id="PTHR21090:SF5">
    <property type="entry name" value="PENTAFUNCTIONAL AROM POLYPEPTIDE"/>
    <property type="match status" value="1"/>
</dbReference>
<dbReference type="Pfam" id="PF00275">
    <property type="entry name" value="EPSP_synthase"/>
    <property type="match status" value="1"/>
</dbReference>
<dbReference type="PIRSF" id="PIRSF000505">
    <property type="entry name" value="EPSPS"/>
    <property type="match status" value="1"/>
</dbReference>
<dbReference type="SUPFAM" id="SSF55205">
    <property type="entry name" value="EPT/RTPC-like"/>
    <property type="match status" value="1"/>
</dbReference>
<dbReference type="PROSITE" id="PS00104">
    <property type="entry name" value="EPSP_SYNTHASE_1"/>
    <property type="match status" value="1"/>
</dbReference>
<dbReference type="PROSITE" id="PS00885">
    <property type="entry name" value="EPSP_SYNTHASE_2"/>
    <property type="match status" value="1"/>
</dbReference>
<evidence type="ECO:0000255" key="1">
    <source>
        <dbReference type="HAMAP-Rule" id="MF_00210"/>
    </source>
</evidence>
<proteinExistence type="inferred from homology"/>